<keyword id="KW-1185">Reference proteome</keyword>
<keyword id="KW-0687">Ribonucleoprotein</keyword>
<keyword id="KW-0689">Ribosomal protein</keyword>
<organism>
    <name type="scientific">Rhodopirellula baltica (strain DSM 10527 / NCIMB 13988 / SH1)</name>
    <dbReference type="NCBI Taxonomy" id="243090"/>
    <lineage>
        <taxon>Bacteria</taxon>
        <taxon>Pseudomonadati</taxon>
        <taxon>Planctomycetota</taxon>
        <taxon>Planctomycetia</taxon>
        <taxon>Pirellulales</taxon>
        <taxon>Pirellulaceae</taxon>
        <taxon>Rhodopirellula</taxon>
    </lineage>
</organism>
<sequence length="108" mass="11963">MSTGPSEVIRIRMEAYDHAVLDQSARDIVDTVKATASIVHGPIPLPTRIERYTVLSSPFVNKKARQQYEIRTHKRLVDIVQASAKTIEALNKLSLPAGVDIKIKASAR</sequence>
<gene>
    <name evidence="1" type="primary">rpsJ</name>
    <name type="ordered locus">RB7829</name>
</gene>
<dbReference type="EMBL" id="BX294146">
    <property type="protein sequence ID" value="CAD75597.1"/>
    <property type="molecule type" value="Genomic_DNA"/>
</dbReference>
<dbReference type="RefSeq" id="NP_868050.1">
    <property type="nucleotide sequence ID" value="NC_005027.1"/>
</dbReference>
<dbReference type="RefSeq" id="WP_007326795.1">
    <property type="nucleotide sequence ID" value="NC_005027.1"/>
</dbReference>
<dbReference type="SMR" id="Q7UN22"/>
<dbReference type="FunCoup" id="Q7UN22">
    <property type="interactions" value="599"/>
</dbReference>
<dbReference type="STRING" id="243090.RB7829"/>
<dbReference type="EnsemblBacteria" id="CAD75597">
    <property type="protein sequence ID" value="CAD75597"/>
    <property type="gene ID" value="RB7829"/>
</dbReference>
<dbReference type="GeneID" id="90608436"/>
<dbReference type="KEGG" id="rba:RB7829"/>
<dbReference type="PATRIC" id="fig|243090.15.peg.3781"/>
<dbReference type="eggNOG" id="COG0051">
    <property type="taxonomic scope" value="Bacteria"/>
</dbReference>
<dbReference type="HOGENOM" id="CLU_122625_1_3_0"/>
<dbReference type="InParanoid" id="Q7UN22"/>
<dbReference type="OrthoDB" id="9804464at2"/>
<dbReference type="Proteomes" id="UP000001025">
    <property type="component" value="Chromosome"/>
</dbReference>
<dbReference type="GO" id="GO:0015935">
    <property type="term" value="C:small ribosomal subunit"/>
    <property type="evidence" value="ECO:0000318"/>
    <property type="project" value="GO_Central"/>
</dbReference>
<dbReference type="GO" id="GO:0003735">
    <property type="term" value="F:structural constituent of ribosome"/>
    <property type="evidence" value="ECO:0000318"/>
    <property type="project" value="GO_Central"/>
</dbReference>
<dbReference type="GO" id="GO:0000049">
    <property type="term" value="F:tRNA binding"/>
    <property type="evidence" value="ECO:0007669"/>
    <property type="project" value="UniProtKB-UniRule"/>
</dbReference>
<dbReference type="GO" id="GO:0006412">
    <property type="term" value="P:translation"/>
    <property type="evidence" value="ECO:0007669"/>
    <property type="project" value="UniProtKB-UniRule"/>
</dbReference>
<dbReference type="FunFam" id="3.30.70.600:FF:000003">
    <property type="entry name" value="30S ribosomal protein S10"/>
    <property type="match status" value="1"/>
</dbReference>
<dbReference type="Gene3D" id="3.30.70.600">
    <property type="entry name" value="Ribosomal protein S10 domain"/>
    <property type="match status" value="1"/>
</dbReference>
<dbReference type="HAMAP" id="MF_00508">
    <property type="entry name" value="Ribosomal_uS10"/>
    <property type="match status" value="1"/>
</dbReference>
<dbReference type="InterPro" id="IPR001848">
    <property type="entry name" value="Ribosomal_uS10"/>
</dbReference>
<dbReference type="InterPro" id="IPR027486">
    <property type="entry name" value="Ribosomal_uS10_dom"/>
</dbReference>
<dbReference type="InterPro" id="IPR036838">
    <property type="entry name" value="Ribosomal_uS10_dom_sf"/>
</dbReference>
<dbReference type="NCBIfam" id="NF001861">
    <property type="entry name" value="PRK00596.1"/>
    <property type="match status" value="1"/>
</dbReference>
<dbReference type="NCBIfam" id="TIGR01049">
    <property type="entry name" value="rpsJ_bact"/>
    <property type="match status" value="1"/>
</dbReference>
<dbReference type="PANTHER" id="PTHR11700">
    <property type="entry name" value="30S RIBOSOMAL PROTEIN S10 FAMILY MEMBER"/>
    <property type="match status" value="1"/>
</dbReference>
<dbReference type="Pfam" id="PF00338">
    <property type="entry name" value="Ribosomal_S10"/>
    <property type="match status" value="1"/>
</dbReference>
<dbReference type="PRINTS" id="PR00971">
    <property type="entry name" value="RIBOSOMALS10"/>
</dbReference>
<dbReference type="SMART" id="SM01403">
    <property type="entry name" value="Ribosomal_S10"/>
    <property type="match status" value="1"/>
</dbReference>
<dbReference type="SUPFAM" id="SSF54999">
    <property type="entry name" value="Ribosomal protein S10"/>
    <property type="match status" value="1"/>
</dbReference>
<protein>
    <recommendedName>
        <fullName evidence="1">Small ribosomal subunit protein uS10</fullName>
    </recommendedName>
    <alternativeName>
        <fullName evidence="2">30S ribosomal protein S10</fullName>
    </alternativeName>
</protein>
<reference key="1">
    <citation type="journal article" date="2003" name="Proc. Natl. Acad. Sci. U.S.A.">
        <title>Complete genome sequence of the marine planctomycete Pirellula sp. strain 1.</title>
        <authorList>
            <person name="Gloeckner F.O."/>
            <person name="Kube M."/>
            <person name="Bauer M."/>
            <person name="Teeling H."/>
            <person name="Lombardot T."/>
            <person name="Ludwig W."/>
            <person name="Gade D."/>
            <person name="Beck A."/>
            <person name="Borzym K."/>
            <person name="Heitmann K."/>
            <person name="Rabus R."/>
            <person name="Schlesner H."/>
            <person name="Amann R."/>
            <person name="Reinhardt R."/>
        </authorList>
    </citation>
    <scope>NUCLEOTIDE SEQUENCE [LARGE SCALE GENOMIC DNA]</scope>
    <source>
        <strain>DSM 10527 / NCIMB 13988 / SH1</strain>
    </source>
</reference>
<evidence type="ECO:0000255" key="1">
    <source>
        <dbReference type="HAMAP-Rule" id="MF_00508"/>
    </source>
</evidence>
<evidence type="ECO:0000305" key="2"/>
<proteinExistence type="inferred from homology"/>
<accession>Q7UN22</accession>
<comment type="function">
    <text evidence="1">Involved in the binding of tRNA to the ribosomes.</text>
</comment>
<comment type="subunit">
    <text evidence="1">Part of the 30S ribosomal subunit.</text>
</comment>
<comment type="similarity">
    <text evidence="1">Belongs to the universal ribosomal protein uS10 family.</text>
</comment>
<feature type="chain" id="PRO_0000146584" description="Small ribosomal subunit protein uS10">
    <location>
        <begin position="1"/>
        <end position="108"/>
    </location>
</feature>
<name>RS10_RHOBA</name>